<dbReference type="EMBL" id="AM086438">
    <property type="protein sequence ID" value="CAJ31078.1"/>
    <property type="molecule type" value="mRNA"/>
</dbReference>
<dbReference type="EMBL" id="AC012563">
    <property type="protein sequence ID" value="AAG52019.1"/>
    <property type="molecule type" value="Genomic_DNA"/>
</dbReference>
<dbReference type="EMBL" id="CP002684">
    <property type="protein sequence ID" value="AEE34742.1"/>
    <property type="molecule type" value="Genomic_DNA"/>
</dbReference>
<dbReference type="EMBL" id="AY074303">
    <property type="protein sequence ID" value="AAL67000.1"/>
    <property type="molecule type" value="mRNA"/>
</dbReference>
<dbReference type="EMBL" id="AY096658">
    <property type="protein sequence ID" value="AAM20292.1"/>
    <property type="molecule type" value="mRNA"/>
</dbReference>
<dbReference type="PIR" id="G96703">
    <property type="entry name" value="G96703"/>
</dbReference>
<dbReference type="SMR" id="Q9C9X0"/>
<dbReference type="BioGRID" id="28355">
    <property type="interactions" value="6"/>
</dbReference>
<dbReference type="FunCoup" id="Q9C9X0">
    <property type="interactions" value="1541"/>
</dbReference>
<dbReference type="IntAct" id="Q9C9X0">
    <property type="interactions" value="7"/>
</dbReference>
<dbReference type="STRING" id="3702.Q9C9X0"/>
<dbReference type="iPTMnet" id="Q9C9X0"/>
<dbReference type="MetOSite" id="Q9C9X0"/>
<dbReference type="PaxDb" id="3702-AT1G68060.1"/>
<dbReference type="ProteomicsDB" id="250941"/>
<dbReference type="EnsemblPlants" id="AT1G68060.1">
    <property type="protein sequence ID" value="AT1G68060.1"/>
    <property type="gene ID" value="AT1G68060"/>
</dbReference>
<dbReference type="GeneID" id="843134"/>
<dbReference type="Gramene" id="AT1G68060.1">
    <property type="protein sequence ID" value="AT1G68060.1"/>
    <property type="gene ID" value="AT1G68060"/>
</dbReference>
<dbReference type="KEGG" id="ath:AT1G68060"/>
<dbReference type="Araport" id="AT1G68060"/>
<dbReference type="TAIR" id="AT1G68060">
    <property type="gene designation" value="MAP70-1"/>
</dbReference>
<dbReference type="eggNOG" id="ENOG502QTPA">
    <property type="taxonomic scope" value="Eukaryota"/>
</dbReference>
<dbReference type="HOGENOM" id="CLU_023069_0_0_1"/>
<dbReference type="InParanoid" id="Q9C9X0"/>
<dbReference type="OMA" id="EENDNWK"/>
<dbReference type="OrthoDB" id="2014495at2759"/>
<dbReference type="PhylomeDB" id="Q9C9X0"/>
<dbReference type="CD-CODE" id="4299E36E">
    <property type="entry name" value="Nucleolus"/>
</dbReference>
<dbReference type="PRO" id="PR:Q9C9X0"/>
<dbReference type="Proteomes" id="UP000006548">
    <property type="component" value="Chromosome 1"/>
</dbReference>
<dbReference type="ExpressionAtlas" id="Q9C9X0">
    <property type="expression patterns" value="baseline and differential"/>
</dbReference>
<dbReference type="GO" id="GO:0010005">
    <property type="term" value="C:cortical microtubule, transverse to long axis"/>
    <property type="evidence" value="ECO:0000314"/>
    <property type="project" value="TAIR"/>
</dbReference>
<dbReference type="GO" id="GO:0009524">
    <property type="term" value="C:phragmoplast"/>
    <property type="evidence" value="ECO:0007669"/>
    <property type="project" value="UniProtKB-SubCell"/>
</dbReference>
<dbReference type="GO" id="GO:0005819">
    <property type="term" value="C:spindle"/>
    <property type="evidence" value="ECO:0007669"/>
    <property type="project" value="UniProtKB-SubCell"/>
</dbReference>
<dbReference type="GO" id="GO:0008017">
    <property type="term" value="F:microtubule binding"/>
    <property type="evidence" value="ECO:0000314"/>
    <property type="project" value="TAIR"/>
</dbReference>
<dbReference type="GO" id="GO:0071555">
    <property type="term" value="P:cell wall organization"/>
    <property type="evidence" value="ECO:0007669"/>
    <property type="project" value="UniProtKB-KW"/>
</dbReference>
<dbReference type="GO" id="GO:0007010">
    <property type="term" value="P:cytoskeleton organization"/>
    <property type="evidence" value="ECO:0000304"/>
    <property type="project" value="TAIR"/>
</dbReference>
<dbReference type="GO" id="GO:0009832">
    <property type="term" value="P:plant-type cell wall biogenesis"/>
    <property type="evidence" value="ECO:0000315"/>
    <property type="project" value="TAIR"/>
</dbReference>
<dbReference type="GO" id="GO:0010051">
    <property type="term" value="P:xylem and phloem pattern formation"/>
    <property type="evidence" value="ECO:0000315"/>
    <property type="project" value="TAIR"/>
</dbReference>
<dbReference type="InterPro" id="IPR009768">
    <property type="entry name" value="MAP70"/>
</dbReference>
<dbReference type="PANTHER" id="PTHR31246:SF21">
    <property type="entry name" value="MICROTUBULE-ASSOCIATED PROTEIN 70-1"/>
    <property type="match status" value="1"/>
</dbReference>
<dbReference type="PANTHER" id="PTHR31246">
    <property type="entry name" value="MICROTUBULE-ASSOCIATED PROTEIN 70-2"/>
    <property type="match status" value="1"/>
</dbReference>
<dbReference type="Pfam" id="PF07058">
    <property type="entry name" value="MAP70"/>
    <property type="match status" value="1"/>
</dbReference>
<accession>Q9C9X0</accession>
<organism>
    <name type="scientific">Arabidopsis thaliana</name>
    <name type="common">Mouse-ear cress</name>
    <dbReference type="NCBI Taxonomy" id="3702"/>
    <lineage>
        <taxon>Eukaryota</taxon>
        <taxon>Viridiplantae</taxon>
        <taxon>Streptophyta</taxon>
        <taxon>Embryophyta</taxon>
        <taxon>Tracheophyta</taxon>
        <taxon>Spermatophyta</taxon>
        <taxon>Magnoliopsida</taxon>
        <taxon>eudicotyledons</taxon>
        <taxon>Gunneridae</taxon>
        <taxon>Pentapetalae</taxon>
        <taxon>rosids</taxon>
        <taxon>malvids</taxon>
        <taxon>Brassicales</taxon>
        <taxon>Brassicaceae</taxon>
        <taxon>Camelineae</taxon>
        <taxon>Arabidopsis</taxon>
    </lineage>
</organism>
<keyword id="KW-0961">Cell wall biogenesis/degradation</keyword>
<keyword id="KW-0175">Coiled coil</keyword>
<keyword id="KW-0963">Cytoplasm</keyword>
<keyword id="KW-0206">Cytoskeleton</keyword>
<keyword id="KW-0493">Microtubule</keyword>
<keyword id="KW-1185">Reference proteome</keyword>
<sequence>MSDVSADGGFLSAEQATTPVAIPTPYPSLTVSASYKEKSSGRRRPVRPSFDAAADNEFITLLHGSDPVKVELNRLENEVRDKDRELSEANAEIKALRLSERQREKACEELTDELAKLDGKLKLTESLLQSKNLEIKKINEEKKASMAAQFAAEATLRRVHAAQKDDDMPPIEAILAPLEAELKLARSEIGKLQEDNRALDRLTKSKEAALLDAERTVETALAKAALVDDLQNKNQELMKQIEICQEENKILDRMHRQKVAEVEKLTQTVRELEEAVLAGGAAANAVRDYQRKFQEMNEERKTLDRELARAKVTANRVATVVANEWKDGNDKVMPVKQWLEERRFLQGEMQQLRDKLAISDRAAKSEAQLKDKFQLRLRVLEETLRGTSSISIRNTPEGRSMSNGPSRRQSIGGSDNLQKFASNGFLSKKTPMRNSFTSNSTSVLKNAKGTSKSFDGGTRSLDRGKALLKGPGNYSFNKACDETKESESPNTWKEDSEEKPPSELPAPATEDNVPGVLYDLLQKEVVALRKSSHEKDQSLKDKDDAIEMLAKKVETLTKAMEVEAKKMRREVAAMEKEVAAMRVDKDQDNRAKRSSNTKPSSNTAQILAARAAGRSGLTRSTQ</sequence>
<feature type="chain" id="PRO_0000409457" description="Microtubule-associated protein 70-1">
    <location>
        <begin position="1"/>
        <end position="622"/>
    </location>
</feature>
<feature type="region of interest" description="Disordered" evidence="2">
    <location>
        <begin position="1"/>
        <end position="27"/>
    </location>
</feature>
<feature type="region of interest" description="Required for targeting to microtubules">
    <location>
        <begin position="250"/>
        <end position="483"/>
    </location>
</feature>
<feature type="region of interest" description="Disordered" evidence="2">
    <location>
        <begin position="388"/>
        <end position="512"/>
    </location>
</feature>
<feature type="region of interest" description="Disordered" evidence="2">
    <location>
        <begin position="579"/>
        <end position="622"/>
    </location>
</feature>
<feature type="coiled-coil region" evidence="1">
    <location>
        <begin position="66"/>
        <end position="365"/>
    </location>
</feature>
<feature type="coiled-coil region" evidence="1">
    <location>
        <begin position="541"/>
        <end position="590"/>
    </location>
</feature>
<feature type="compositionally biased region" description="Polar residues" evidence="2">
    <location>
        <begin position="400"/>
        <end position="425"/>
    </location>
</feature>
<feature type="compositionally biased region" description="Polar residues" evidence="2">
    <location>
        <begin position="432"/>
        <end position="453"/>
    </location>
</feature>
<feature type="compositionally biased region" description="Basic and acidic residues" evidence="2">
    <location>
        <begin position="479"/>
        <end position="501"/>
    </location>
</feature>
<feature type="compositionally biased region" description="Basic and acidic residues" evidence="2">
    <location>
        <begin position="579"/>
        <end position="591"/>
    </location>
</feature>
<feature type="compositionally biased region" description="Polar residues" evidence="2">
    <location>
        <begin position="594"/>
        <end position="605"/>
    </location>
</feature>
<gene>
    <name type="primary">MAP70.1</name>
    <name type="ordered locus">At1g68060</name>
    <name type="ORF">T23K23.9</name>
</gene>
<comment type="function">
    <text evidence="5">Plant-specific protein that interact with microtubules. In association with MAP70.5, is essential for the normal banding pattern of secondary cell wall and for the proper development of xylem tracheary elements and wood formation.</text>
</comment>
<comment type="subunit">
    <text evidence="5">Interacts with MAP70.5 and itself.</text>
</comment>
<comment type="subcellular location">
    <subcellularLocation>
        <location evidence="3 4 5">Cytoplasm</location>
        <location evidence="3 4 5">Cytoskeleton</location>
    </subcellularLocation>
    <subcellularLocation>
        <location evidence="3">Cytoplasm</location>
        <location evidence="3">Cytoskeleton</location>
        <location evidence="3">Phragmoplast</location>
    </subcellularLocation>
    <subcellularLocation>
        <location evidence="3">Cytoplasm</location>
        <location evidence="3">Cytoskeleton</location>
        <location evidence="3">Spindle</location>
    </subcellularLocation>
    <text evidence="3">Associated with microtubules in interphase arrays, preprophase bands, spindles, and phragmoplasts. Associated with microtubules in tracheary elements.</text>
</comment>
<comment type="induction">
    <text evidence="6">Down-regulated during senescence.</text>
</comment>
<comment type="similarity">
    <text evidence="7">Belongs to the MAP70 family.</text>
</comment>
<reference key="1">
    <citation type="journal article" date="2005" name="Plant J.">
        <title>Identification of a novel family of 70 kDa microtubule-associated proteins in Arabidopsis cells.</title>
        <authorList>
            <person name="Korolev A.V."/>
            <person name="Chan J."/>
            <person name="Naldrett M.J."/>
            <person name="Doonan J.H."/>
            <person name="Lloyd C.W."/>
        </authorList>
    </citation>
    <scope>NUCLEOTIDE SEQUENCE [MRNA]</scope>
    <scope>IDENTIFICATION BY MASS SPECTROMETRY</scope>
    <scope>SUBCELLULAR LOCATION</scope>
</reference>
<reference key="2">
    <citation type="journal article" date="2000" name="Nature">
        <title>Sequence and analysis of chromosome 1 of the plant Arabidopsis thaliana.</title>
        <authorList>
            <person name="Theologis A."/>
            <person name="Ecker J.R."/>
            <person name="Palm C.J."/>
            <person name="Federspiel N.A."/>
            <person name="Kaul S."/>
            <person name="White O."/>
            <person name="Alonso J."/>
            <person name="Altafi H."/>
            <person name="Araujo R."/>
            <person name="Bowman C.L."/>
            <person name="Brooks S.Y."/>
            <person name="Buehler E."/>
            <person name="Chan A."/>
            <person name="Chao Q."/>
            <person name="Chen H."/>
            <person name="Cheuk R.F."/>
            <person name="Chin C.W."/>
            <person name="Chung M.K."/>
            <person name="Conn L."/>
            <person name="Conway A.B."/>
            <person name="Conway A.R."/>
            <person name="Creasy T.H."/>
            <person name="Dewar K."/>
            <person name="Dunn P."/>
            <person name="Etgu P."/>
            <person name="Feldblyum T.V."/>
            <person name="Feng J.-D."/>
            <person name="Fong B."/>
            <person name="Fujii C.Y."/>
            <person name="Gill J.E."/>
            <person name="Goldsmith A.D."/>
            <person name="Haas B."/>
            <person name="Hansen N.F."/>
            <person name="Hughes B."/>
            <person name="Huizar L."/>
            <person name="Hunter J.L."/>
            <person name="Jenkins J."/>
            <person name="Johnson-Hopson C."/>
            <person name="Khan S."/>
            <person name="Khaykin E."/>
            <person name="Kim C.J."/>
            <person name="Koo H.L."/>
            <person name="Kremenetskaia I."/>
            <person name="Kurtz D.B."/>
            <person name="Kwan A."/>
            <person name="Lam B."/>
            <person name="Langin-Hooper S."/>
            <person name="Lee A."/>
            <person name="Lee J.M."/>
            <person name="Lenz C.A."/>
            <person name="Li J.H."/>
            <person name="Li Y.-P."/>
            <person name="Lin X."/>
            <person name="Liu S.X."/>
            <person name="Liu Z.A."/>
            <person name="Luros J.S."/>
            <person name="Maiti R."/>
            <person name="Marziali A."/>
            <person name="Militscher J."/>
            <person name="Miranda M."/>
            <person name="Nguyen M."/>
            <person name="Nierman W.C."/>
            <person name="Osborne B.I."/>
            <person name="Pai G."/>
            <person name="Peterson J."/>
            <person name="Pham P.K."/>
            <person name="Rizzo M."/>
            <person name="Rooney T."/>
            <person name="Rowley D."/>
            <person name="Sakano H."/>
            <person name="Salzberg S.L."/>
            <person name="Schwartz J.R."/>
            <person name="Shinn P."/>
            <person name="Southwick A.M."/>
            <person name="Sun H."/>
            <person name="Tallon L.J."/>
            <person name="Tambunga G."/>
            <person name="Toriumi M.J."/>
            <person name="Town C.D."/>
            <person name="Utterback T."/>
            <person name="Van Aken S."/>
            <person name="Vaysberg M."/>
            <person name="Vysotskaia V.S."/>
            <person name="Walker M."/>
            <person name="Wu D."/>
            <person name="Yu G."/>
            <person name="Fraser C.M."/>
            <person name="Venter J.C."/>
            <person name="Davis R.W."/>
        </authorList>
    </citation>
    <scope>NUCLEOTIDE SEQUENCE [LARGE SCALE GENOMIC DNA]</scope>
    <source>
        <strain>cv. Columbia</strain>
    </source>
</reference>
<reference key="3">
    <citation type="journal article" date="2017" name="Plant J.">
        <title>Araport11: a complete reannotation of the Arabidopsis thaliana reference genome.</title>
        <authorList>
            <person name="Cheng C.Y."/>
            <person name="Krishnakumar V."/>
            <person name="Chan A.P."/>
            <person name="Thibaud-Nissen F."/>
            <person name="Schobel S."/>
            <person name="Town C.D."/>
        </authorList>
    </citation>
    <scope>GENOME REANNOTATION</scope>
    <source>
        <strain>cv. Columbia</strain>
    </source>
</reference>
<reference key="4">
    <citation type="journal article" date="2003" name="Science">
        <title>Empirical analysis of transcriptional activity in the Arabidopsis genome.</title>
        <authorList>
            <person name="Yamada K."/>
            <person name="Lim J."/>
            <person name="Dale J.M."/>
            <person name="Chen H."/>
            <person name="Shinn P."/>
            <person name="Palm C.J."/>
            <person name="Southwick A.M."/>
            <person name="Wu H.C."/>
            <person name="Kim C.J."/>
            <person name="Nguyen M."/>
            <person name="Pham P.K."/>
            <person name="Cheuk R.F."/>
            <person name="Karlin-Newmann G."/>
            <person name="Liu S.X."/>
            <person name="Lam B."/>
            <person name="Sakano H."/>
            <person name="Wu T."/>
            <person name="Yu G."/>
            <person name="Miranda M."/>
            <person name="Quach H.L."/>
            <person name="Tripp M."/>
            <person name="Chang C.H."/>
            <person name="Lee J.M."/>
            <person name="Toriumi M.J."/>
            <person name="Chan M.M."/>
            <person name="Tang C.C."/>
            <person name="Onodera C.S."/>
            <person name="Deng J.M."/>
            <person name="Akiyama K."/>
            <person name="Ansari Y."/>
            <person name="Arakawa T."/>
            <person name="Banh J."/>
            <person name="Banno F."/>
            <person name="Bowser L."/>
            <person name="Brooks S.Y."/>
            <person name="Carninci P."/>
            <person name="Chao Q."/>
            <person name="Choy N."/>
            <person name="Enju A."/>
            <person name="Goldsmith A.D."/>
            <person name="Gurjal M."/>
            <person name="Hansen N.F."/>
            <person name="Hayashizaki Y."/>
            <person name="Johnson-Hopson C."/>
            <person name="Hsuan V.W."/>
            <person name="Iida K."/>
            <person name="Karnes M."/>
            <person name="Khan S."/>
            <person name="Koesema E."/>
            <person name="Ishida J."/>
            <person name="Jiang P.X."/>
            <person name="Jones T."/>
            <person name="Kawai J."/>
            <person name="Kamiya A."/>
            <person name="Meyers C."/>
            <person name="Nakajima M."/>
            <person name="Narusaka M."/>
            <person name="Seki M."/>
            <person name="Sakurai T."/>
            <person name="Satou M."/>
            <person name="Tamse R."/>
            <person name="Vaysberg M."/>
            <person name="Wallender E.K."/>
            <person name="Wong C."/>
            <person name="Yamamura Y."/>
            <person name="Yuan S."/>
            <person name="Shinozaki K."/>
            <person name="Davis R.W."/>
            <person name="Theologis A."/>
            <person name="Ecker J.R."/>
        </authorList>
    </citation>
    <scope>NUCLEOTIDE SEQUENCE [LARGE SCALE MRNA]</scope>
    <source>
        <strain>cv. Columbia</strain>
    </source>
</reference>
<reference key="5">
    <citation type="journal article" date="2007" name="J. Cell Sci.">
        <title>AtMAP70-5, a divergent member of the MAP70 family of microtubule-associated proteins, is required for anisotropic cell growth in Arabidopsis.</title>
        <authorList>
            <person name="Korolev A.V."/>
            <person name="Buschmann H."/>
            <person name="Doonan J.H."/>
            <person name="Lloyd C.W."/>
        </authorList>
    </citation>
    <scope>SUBCELLULAR LOCATION</scope>
</reference>
<reference key="6">
    <citation type="journal article" date="2009" name="Plant Physiol.">
        <title>Large-scale Arabidopsis phosphoproteome profiling reveals novel chloroplast kinase substrates and phosphorylation networks.</title>
        <authorList>
            <person name="Reiland S."/>
            <person name="Messerli G."/>
            <person name="Baerenfaller K."/>
            <person name="Gerrits B."/>
            <person name="Endler A."/>
            <person name="Grossmann J."/>
            <person name="Gruissem W."/>
            <person name="Baginsky S."/>
        </authorList>
    </citation>
    <scope>IDENTIFICATION BY MASS SPECTROMETRY [LARGE SCALE ANALYSIS]</scope>
</reference>
<reference key="7">
    <citation type="journal article" date="2010" name="Curr. Biol.">
        <title>The microtubule-associated protein AtMAP70-5 regulates secondary wall patterning in Arabidopsis wood cells.</title>
        <authorList>
            <person name="Pesquet E."/>
            <person name="Korolev A.V."/>
            <person name="Calder G."/>
            <person name="Lloyd C.W."/>
        </authorList>
    </citation>
    <scope>FUNCTION</scope>
    <scope>SUBCELLULAR LOCATION</scope>
    <scope>INTERACTION WITH MAP70.5</scope>
</reference>
<reference key="8">
    <citation type="journal article" date="2010" name="Plant Physiol.">
        <title>Leaf senescence is accompanied by an early disruption of the microtubule network in Arabidopsis.</title>
        <authorList>
            <person name="Keech O."/>
            <person name="Pesquet E."/>
            <person name="Gutierrez L."/>
            <person name="Ahad A."/>
            <person name="Bellini C."/>
            <person name="Smith S.M."/>
            <person name="Gardestroem P."/>
        </authorList>
    </citation>
    <scope>INDUCTION</scope>
</reference>
<name>MP701_ARATH</name>
<proteinExistence type="evidence at protein level"/>
<protein>
    <recommendedName>
        <fullName>Microtubule-associated protein 70-1</fullName>
        <shortName>AtMAP70-1</shortName>
    </recommendedName>
    <alternativeName>
        <fullName>70 kDa microtubule-associated protein 1</fullName>
    </alternativeName>
</protein>
<evidence type="ECO:0000255" key="1"/>
<evidence type="ECO:0000256" key="2">
    <source>
        <dbReference type="SAM" id="MobiDB-lite"/>
    </source>
</evidence>
<evidence type="ECO:0000269" key="3">
    <source>
    </source>
</evidence>
<evidence type="ECO:0000269" key="4">
    <source>
    </source>
</evidence>
<evidence type="ECO:0000269" key="5">
    <source>
    </source>
</evidence>
<evidence type="ECO:0000269" key="6">
    <source>
    </source>
</evidence>
<evidence type="ECO:0000305" key="7"/>